<reference key="1">
    <citation type="journal article" date="1984" name="Hoppe-Seyler's Z. Physiol. Chem.">
        <title>Amino-acid sequence of gayal hemoglobin (Bos gaurus frontalis, Bovidae).</title>
        <authorList>
            <person name="Lalthantluanga R."/>
            <person name="Braunitzer G."/>
        </authorList>
    </citation>
    <scope>PROTEIN SEQUENCE OF 2-142</scope>
</reference>
<feature type="initiator methionine" description="Removed" evidence="3">
    <location>
        <position position="1"/>
    </location>
</feature>
<feature type="chain" id="PRO_0000052565" description="Hemoglobin subunit alpha">
    <location>
        <begin position="2"/>
        <end position="142"/>
    </location>
</feature>
<feature type="peptide" id="PRO_0000455841" description="Hemopressin" evidence="2">
    <location>
        <begin position="96"/>
        <end position="104"/>
    </location>
</feature>
<feature type="domain" description="Globin" evidence="5">
    <location>
        <begin position="2"/>
        <end position="142"/>
    </location>
</feature>
<feature type="binding site" evidence="5">
    <location>
        <position position="59"/>
    </location>
    <ligand>
        <name>O2</name>
        <dbReference type="ChEBI" id="CHEBI:15379"/>
    </ligand>
</feature>
<feature type="binding site" description="proximal binding residue" evidence="5">
    <location>
        <position position="88"/>
    </location>
    <ligand>
        <name>heme b</name>
        <dbReference type="ChEBI" id="CHEBI:60344"/>
    </ligand>
    <ligandPart>
        <name>Fe</name>
        <dbReference type="ChEBI" id="CHEBI:18248"/>
    </ligandPart>
</feature>
<feature type="modified residue" description="Phosphoserine" evidence="4">
    <location>
        <position position="4"/>
    </location>
</feature>
<feature type="modified residue" description="N6-succinyllysine" evidence="1">
    <location>
        <position position="8"/>
    </location>
</feature>
<feature type="modified residue" description="N6-succinyllysine" evidence="1">
    <location>
        <position position="12"/>
    </location>
</feature>
<feature type="modified residue" description="N6-acetyllysine; alternate" evidence="4">
    <location>
        <position position="17"/>
    </location>
</feature>
<feature type="modified residue" description="N6-succinyllysine; alternate" evidence="1">
    <location>
        <position position="17"/>
    </location>
</feature>
<feature type="modified residue" description="Phosphotyrosine" evidence="4">
    <location>
        <position position="25"/>
    </location>
</feature>
<feature type="modified residue" description="Phosphoserine" evidence="4">
    <location>
        <position position="36"/>
    </location>
</feature>
<feature type="modified residue" description="N6-succinyllysine" evidence="1">
    <location>
        <position position="41"/>
    </location>
</feature>
<feature type="modified residue" description="Phosphoserine" evidence="4">
    <location>
        <position position="50"/>
    </location>
</feature>
<feature type="modified residue" description="Phosphoserine" evidence="1">
    <location>
        <position position="103"/>
    </location>
</feature>
<feature type="modified residue" description="Phosphothreonine" evidence="1">
    <location>
        <position position="109"/>
    </location>
</feature>
<feature type="modified residue" description="Phosphoserine" evidence="1">
    <location>
        <position position="125"/>
    </location>
</feature>
<feature type="modified residue" description="Phosphothreonine" evidence="1">
    <location>
        <position position="135"/>
    </location>
</feature>
<feature type="modified residue" description="Phosphothreonine" evidence="1">
    <location>
        <position position="138"/>
    </location>
</feature>
<feature type="modified residue" description="Phosphoserine" evidence="1">
    <location>
        <position position="139"/>
    </location>
</feature>
<gene>
    <name type="primary">HBA</name>
</gene>
<keyword id="KW-0007">Acetylation</keyword>
<keyword id="KW-0903">Direct protein sequencing</keyword>
<keyword id="KW-0349">Heme</keyword>
<keyword id="KW-0408">Iron</keyword>
<keyword id="KW-0479">Metal-binding</keyword>
<keyword id="KW-0561">Oxygen transport</keyword>
<keyword id="KW-0597">Phosphoprotein</keyword>
<keyword id="KW-0813">Transport</keyword>
<sequence>MVLSAADKGNVKAAWGKVGDHAAEYGAEALERMFLSFPTTKTYFPHFDLSHGSAQVKGHGAKVAAALTKAVGHLDDLPGALSELSDLHAHKLRVDPVNFKLLSHSLLVTLASHLPNDFTPAVHASLDKFLANVSTVLTSKYR</sequence>
<name>HBA_BOSGF</name>
<dbReference type="PIR" id="A02292">
    <property type="entry name" value="HABOG"/>
</dbReference>
<dbReference type="BMRB" id="P01969"/>
<dbReference type="SMR" id="P01969"/>
<dbReference type="GO" id="GO:0072562">
    <property type="term" value="C:blood microparticle"/>
    <property type="evidence" value="ECO:0007669"/>
    <property type="project" value="TreeGrafter"/>
</dbReference>
<dbReference type="GO" id="GO:0031838">
    <property type="term" value="C:haptoglobin-hemoglobin complex"/>
    <property type="evidence" value="ECO:0007669"/>
    <property type="project" value="TreeGrafter"/>
</dbReference>
<dbReference type="GO" id="GO:0005833">
    <property type="term" value="C:hemoglobin complex"/>
    <property type="evidence" value="ECO:0007669"/>
    <property type="project" value="InterPro"/>
</dbReference>
<dbReference type="GO" id="GO:0031720">
    <property type="term" value="F:haptoglobin binding"/>
    <property type="evidence" value="ECO:0007669"/>
    <property type="project" value="TreeGrafter"/>
</dbReference>
<dbReference type="GO" id="GO:0020037">
    <property type="term" value="F:heme binding"/>
    <property type="evidence" value="ECO:0007669"/>
    <property type="project" value="InterPro"/>
</dbReference>
<dbReference type="GO" id="GO:0005506">
    <property type="term" value="F:iron ion binding"/>
    <property type="evidence" value="ECO:0007669"/>
    <property type="project" value="InterPro"/>
</dbReference>
<dbReference type="GO" id="GO:0043177">
    <property type="term" value="F:organic acid binding"/>
    <property type="evidence" value="ECO:0007669"/>
    <property type="project" value="TreeGrafter"/>
</dbReference>
<dbReference type="GO" id="GO:0019825">
    <property type="term" value="F:oxygen binding"/>
    <property type="evidence" value="ECO:0007669"/>
    <property type="project" value="InterPro"/>
</dbReference>
<dbReference type="GO" id="GO:0005344">
    <property type="term" value="F:oxygen carrier activity"/>
    <property type="evidence" value="ECO:0007669"/>
    <property type="project" value="UniProtKB-KW"/>
</dbReference>
<dbReference type="GO" id="GO:0004601">
    <property type="term" value="F:peroxidase activity"/>
    <property type="evidence" value="ECO:0007669"/>
    <property type="project" value="TreeGrafter"/>
</dbReference>
<dbReference type="GO" id="GO:0042744">
    <property type="term" value="P:hydrogen peroxide catabolic process"/>
    <property type="evidence" value="ECO:0007669"/>
    <property type="project" value="TreeGrafter"/>
</dbReference>
<dbReference type="CDD" id="cd08927">
    <property type="entry name" value="Hb-alpha-like"/>
    <property type="match status" value="1"/>
</dbReference>
<dbReference type="FunFam" id="1.10.490.10:FF:000002">
    <property type="entry name" value="Hemoglobin subunit alpha"/>
    <property type="match status" value="1"/>
</dbReference>
<dbReference type="Gene3D" id="1.10.490.10">
    <property type="entry name" value="Globins"/>
    <property type="match status" value="1"/>
</dbReference>
<dbReference type="InterPro" id="IPR000971">
    <property type="entry name" value="Globin"/>
</dbReference>
<dbReference type="InterPro" id="IPR009050">
    <property type="entry name" value="Globin-like_sf"/>
</dbReference>
<dbReference type="InterPro" id="IPR012292">
    <property type="entry name" value="Globin/Proto"/>
</dbReference>
<dbReference type="InterPro" id="IPR002338">
    <property type="entry name" value="Hemoglobin_a-typ"/>
</dbReference>
<dbReference type="InterPro" id="IPR050056">
    <property type="entry name" value="Hemoglobin_oxygen_transport"/>
</dbReference>
<dbReference type="InterPro" id="IPR002339">
    <property type="entry name" value="Hemoglobin_pi"/>
</dbReference>
<dbReference type="PANTHER" id="PTHR11442">
    <property type="entry name" value="HEMOGLOBIN FAMILY MEMBER"/>
    <property type="match status" value="1"/>
</dbReference>
<dbReference type="PANTHER" id="PTHR11442:SF48">
    <property type="entry name" value="HEMOGLOBIN SUBUNIT ALPHA"/>
    <property type="match status" value="1"/>
</dbReference>
<dbReference type="Pfam" id="PF00042">
    <property type="entry name" value="Globin"/>
    <property type="match status" value="1"/>
</dbReference>
<dbReference type="PRINTS" id="PR00612">
    <property type="entry name" value="ALPHAHAEM"/>
</dbReference>
<dbReference type="PRINTS" id="PR00815">
    <property type="entry name" value="PIHAEM"/>
</dbReference>
<dbReference type="SUPFAM" id="SSF46458">
    <property type="entry name" value="Globin-like"/>
    <property type="match status" value="1"/>
</dbReference>
<dbReference type="PROSITE" id="PS01033">
    <property type="entry name" value="GLOBIN"/>
    <property type="match status" value="1"/>
</dbReference>
<proteinExistence type="evidence at protein level"/>
<protein>
    <recommendedName>
        <fullName>Hemoglobin subunit alpha</fullName>
    </recommendedName>
    <alternativeName>
        <fullName>Alpha-globin</fullName>
    </alternativeName>
    <alternativeName>
        <fullName>Hemoglobin alpha chain</fullName>
    </alternativeName>
    <component>
        <recommendedName>
            <fullName evidence="2">Hemopressin</fullName>
        </recommendedName>
    </component>
</protein>
<comment type="function">
    <text>Involved in oxygen transport from the lung to the various peripheral tissues.</text>
</comment>
<comment type="function">
    <molecule>Hemopressin</molecule>
    <text evidence="2">Hemopressin acts as an antagonist peptide of the cannabinoid receptor CNR1. Hemopressin-binding efficiently blocks cannabinoid receptor CNR1 and subsequent signaling.</text>
</comment>
<comment type="subunit">
    <text>Heterotetramer of two alpha chains and two beta chains.</text>
</comment>
<comment type="tissue specificity">
    <text>Red blood cells.</text>
</comment>
<comment type="similarity">
    <text evidence="5">Belongs to the globin family.</text>
</comment>
<evidence type="ECO:0000250" key="1">
    <source>
        <dbReference type="UniProtKB" id="P01942"/>
    </source>
</evidence>
<evidence type="ECO:0000250" key="2">
    <source>
        <dbReference type="UniProtKB" id="P01946"/>
    </source>
</evidence>
<evidence type="ECO:0000250" key="3">
    <source>
        <dbReference type="UniProtKB" id="P18969"/>
    </source>
</evidence>
<evidence type="ECO:0000250" key="4">
    <source>
        <dbReference type="UniProtKB" id="P69905"/>
    </source>
</evidence>
<evidence type="ECO:0000255" key="5">
    <source>
        <dbReference type="PROSITE-ProRule" id="PRU00238"/>
    </source>
</evidence>
<organism>
    <name type="scientific">Bos gaurus frontalis</name>
    <name type="common">Domestic gayal</name>
    <name type="synonym">Bos frontalis</name>
    <dbReference type="NCBI Taxonomy" id="30520"/>
    <lineage>
        <taxon>Eukaryota</taxon>
        <taxon>Metazoa</taxon>
        <taxon>Chordata</taxon>
        <taxon>Craniata</taxon>
        <taxon>Vertebrata</taxon>
        <taxon>Euteleostomi</taxon>
        <taxon>Mammalia</taxon>
        <taxon>Eutheria</taxon>
        <taxon>Laurasiatheria</taxon>
        <taxon>Artiodactyla</taxon>
        <taxon>Ruminantia</taxon>
        <taxon>Pecora</taxon>
        <taxon>Bovidae</taxon>
        <taxon>Bovinae</taxon>
        <taxon>Bos</taxon>
    </lineage>
</organism>
<accession>P01969</accession>